<name>GATY_ECOK1</name>
<evidence type="ECO:0000255" key="1">
    <source>
        <dbReference type="HAMAP-Rule" id="MF_01294"/>
    </source>
</evidence>
<comment type="function">
    <text evidence="1">Catalytic subunit of the tagatose-1,6-bisphosphate aldolase GatYZ, which catalyzes the reversible aldol condensation of dihydroxyacetone phosphate (DHAP or glycerone-phosphate) with glyceraldehyde 3-phosphate (G3P) to produce tagatose 1,6-bisphosphate (TBP). Requires GatZ subunit for full activity and stability. Is involved in the catabolism of galactitol.</text>
</comment>
<comment type="catalytic activity">
    <reaction evidence="1">
        <text>D-tagatofuranose 1,6-bisphosphate = D-glyceraldehyde 3-phosphate + dihydroxyacetone phosphate</text>
        <dbReference type="Rhea" id="RHEA:22948"/>
        <dbReference type="ChEBI" id="CHEBI:57642"/>
        <dbReference type="ChEBI" id="CHEBI:58694"/>
        <dbReference type="ChEBI" id="CHEBI:59776"/>
        <dbReference type="EC" id="4.1.2.40"/>
    </reaction>
</comment>
<comment type="cofactor">
    <cofactor evidence="1">
        <name>Zn(2+)</name>
        <dbReference type="ChEBI" id="CHEBI:29105"/>
    </cofactor>
    <text evidence="1">Binds 1 zinc ion per subunit.</text>
</comment>
<comment type="pathway">
    <text evidence="1">Carbohydrate metabolism; D-tagatose 6-phosphate degradation; D-glyceraldehyde 3-phosphate and glycerone phosphate from D-tagatose 6-phosphate: step 2/2.</text>
</comment>
<comment type="subunit">
    <text evidence="1">Forms a complex with GatZ.</text>
</comment>
<comment type="similarity">
    <text evidence="1">Belongs to the class II fructose-bisphosphate aldolase family. TagBP aldolase GatY subfamily.</text>
</comment>
<reference key="1">
    <citation type="journal article" date="2007" name="J. Bacteriol.">
        <title>The genome sequence of avian pathogenic Escherichia coli strain O1:K1:H7 shares strong similarities with human extraintestinal pathogenic E. coli genomes.</title>
        <authorList>
            <person name="Johnson T.J."/>
            <person name="Kariyawasam S."/>
            <person name="Wannemuehler Y."/>
            <person name="Mangiamele P."/>
            <person name="Johnson S.J."/>
            <person name="Doetkott C."/>
            <person name="Skyberg J.A."/>
            <person name="Lynne A.M."/>
            <person name="Johnson J.R."/>
            <person name="Nolan L.K."/>
        </authorList>
    </citation>
    <scope>NUCLEOTIDE SEQUENCE [LARGE SCALE GENOMIC DNA]</scope>
</reference>
<gene>
    <name evidence="1" type="primary">gatY</name>
    <name type="ordered locus">Ecok1_20080</name>
    <name type="ORF">APECO1_4449</name>
</gene>
<sequence>MYVVSTKQMLNNARRGGYAVPAFNIHNLETMQVVVETAASMHAPVIIAGTPGTFTHAGTENLMALVSAMAKQYHHPLAIHLDHHTKFDDIAQKVRSGVRSVMIDASHLPFAQNISRVKEVVDFCHRFDVSVEAELGQLGGQEDDVQVNEADAFYTNPVQAREFAEATGIDSLAVAIGTAHGMYASAPALDFSRLENIRQWVNLPLVLHGASGLSTKDIQQTIKLGICKINVATELKNAFSQALKNYLTEYPEATDPRDYLQSAKSAMRDVVSKVIADCGCEGRA</sequence>
<protein>
    <recommendedName>
        <fullName evidence="1">D-tagatose-1,6-bisphosphate aldolase subunit GatY</fullName>
        <shortName evidence="1">TBPA</shortName>
        <shortName evidence="1">TagBP aldolase</shortName>
        <ecNumber evidence="1">4.1.2.40</ecNumber>
    </recommendedName>
    <alternativeName>
        <fullName evidence="1">D-tagatose-bisphosphate aldolase class II</fullName>
    </alternativeName>
    <alternativeName>
        <fullName evidence="1">Tagatose-bisphosphate aldolase</fullName>
    </alternativeName>
</protein>
<proteinExistence type="inferred from homology"/>
<dbReference type="EC" id="4.1.2.40" evidence="1"/>
<dbReference type="EMBL" id="CP000468">
    <property type="protein sequence ID" value="ABJ01502.1"/>
    <property type="molecule type" value="Genomic_DNA"/>
</dbReference>
<dbReference type="RefSeq" id="WP_000289810.1">
    <property type="nucleotide sequence ID" value="NZ_CADILS010000067.1"/>
</dbReference>
<dbReference type="SMR" id="A1ACW2"/>
<dbReference type="KEGG" id="ecv:APECO1_4449"/>
<dbReference type="HOGENOM" id="CLU_040088_0_1_6"/>
<dbReference type="UniPathway" id="UPA00704">
    <property type="reaction ID" value="UER00716"/>
</dbReference>
<dbReference type="Proteomes" id="UP000008216">
    <property type="component" value="Chromosome"/>
</dbReference>
<dbReference type="GO" id="GO:0005829">
    <property type="term" value="C:cytosol"/>
    <property type="evidence" value="ECO:0007669"/>
    <property type="project" value="TreeGrafter"/>
</dbReference>
<dbReference type="GO" id="GO:0009025">
    <property type="term" value="F:tagatose-bisphosphate aldolase activity"/>
    <property type="evidence" value="ECO:0007669"/>
    <property type="project" value="UniProtKB-UniRule"/>
</dbReference>
<dbReference type="GO" id="GO:0008270">
    <property type="term" value="F:zinc ion binding"/>
    <property type="evidence" value="ECO:0007669"/>
    <property type="project" value="UniProtKB-UniRule"/>
</dbReference>
<dbReference type="GO" id="GO:2001059">
    <property type="term" value="P:D-tagatose 6-phosphate catabolic process"/>
    <property type="evidence" value="ECO:0007669"/>
    <property type="project" value="UniProtKB-UniRule"/>
</dbReference>
<dbReference type="GO" id="GO:0019404">
    <property type="term" value="P:galactitol catabolic process"/>
    <property type="evidence" value="ECO:0007669"/>
    <property type="project" value="InterPro"/>
</dbReference>
<dbReference type="CDD" id="cd00947">
    <property type="entry name" value="TBP_aldolase_IIB"/>
    <property type="match status" value="1"/>
</dbReference>
<dbReference type="FunFam" id="3.20.20.70:FF:000043">
    <property type="entry name" value="D-tagatose-1,6-bisphosphate aldolase subunit GatY"/>
    <property type="match status" value="1"/>
</dbReference>
<dbReference type="Gene3D" id="3.20.20.70">
    <property type="entry name" value="Aldolase class I"/>
    <property type="match status" value="1"/>
</dbReference>
<dbReference type="HAMAP" id="MF_01294">
    <property type="entry name" value="TagBP_aldolase_GatY"/>
    <property type="match status" value="1"/>
</dbReference>
<dbReference type="InterPro" id="IPR013785">
    <property type="entry name" value="Aldolase_TIM"/>
</dbReference>
<dbReference type="InterPro" id="IPR050246">
    <property type="entry name" value="Class_II_FBP_aldolase"/>
</dbReference>
<dbReference type="InterPro" id="IPR000771">
    <property type="entry name" value="FBA_II"/>
</dbReference>
<dbReference type="InterPro" id="IPR011288">
    <property type="entry name" value="TagBP_ald_KbaY/GatY"/>
</dbReference>
<dbReference type="InterPro" id="IPR023955">
    <property type="entry name" value="TagBP_aldolase_GatY"/>
</dbReference>
<dbReference type="NCBIfam" id="TIGR00167">
    <property type="entry name" value="cbbA"/>
    <property type="match status" value="1"/>
</dbReference>
<dbReference type="NCBIfam" id="NF006626">
    <property type="entry name" value="PRK09195.1"/>
    <property type="match status" value="1"/>
</dbReference>
<dbReference type="NCBIfam" id="NF009374">
    <property type="entry name" value="PRK12737.1"/>
    <property type="match status" value="1"/>
</dbReference>
<dbReference type="NCBIfam" id="TIGR01858">
    <property type="entry name" value="tag_bisphos_ald"/>
    <property type="match status" value="1"/>
</dbReference>
<dbReference type="PANTHER" id="PTHR30304">
    <property type="entry name" value="D-TAGATOSE-1,6-BISPHOSPHATE ALDOLASE"/>
    <property type="match status" value="1"/>
</dbReference>
<dbReference type="PANTHER" id="PTHR30304:SF0">
    <property type="entry name" value="D-TAGATOSE-1,6-BISPHOSPHATE ALDOLASE SUBUNIT GATY-RELATED"/>
    <property type="match status" value="1"/>
</dbReference>
<dbReference type="Pfam" id="PF01116">
    <property type="entry name" value="F_bP_aldolase"/>
    <property type="match status" value="1"/>
</dbReference>
<dbReference type="PIRSF" id="PIRSF001359">
    <property type="entry name" value="F_bP_aldolase_II"/>
    <property type="match status" value="1"/>
</dbReference>
<dbReference type="SUPFAM" id="SSF51569">
    <property type="entry name" value="Aldolase"/>
    <property type="match status" value="1"/>
</dbReference>
<dbReference type="PROSITE" id="PS00602">
    <property type="entry name" value="ALDOLASE_CLASS_II_1"/>
    <property type="match status" value="1"/>
</dbReference>
<dbReference type="PROSITE" id="PS00806">
    <property type="entry name" value="ALDOLASE_CLASS_II_2"/>
    <property type="match status" value="1"/>
</dbReference>
<feature type="chain" id="PRO_0000355336" description="D-tagatose-1,6-bisphosphate aldolase subunit GatY">
    <location>
        <begin position="1"/>
        <end position="284"/>
    </location>
</feature>
<feature type="active site" description="Proton donor" evidence="1">
    <location>
        <position position="82"/>
    </location>
</feature>
<feature type="binding site" evidence="1">
    <location>
        <position position="83"/>
    </location>
    <ligand>
        <name>Zn(2+)</name>
        <dbReference type="ChEBI" id="CHEBI:29105"/>
        <note>catalytic</note>
    </ligand>
</feature>
<feature type="binding site" evidence="1">
    <location>
        <position position="180"/>
    </location>
    <ligand>
        <name>Zn(2+)</name>
        <dbReference type="ChEBI" id="CHEBI:29105"/>
        <note>catalytic</note>
    </ligand>
</feature>
<feature type="binding site" evidence="1">
    <location>
        <position position="181"/>
    </location>
    <ligand>
        <name>dihydroxyacetone phosphate</name>
        <dbReference type="ChEBI" id="CHEBI:57642"/>
    </ligand>
</feature>
<feature type="binding site" evidence="1">
    <location>
        <position position="208"/>
    </location>
    <ligand>
        <name>Zn(2+)</name>
        <dbReference type="ChEBI" id="CHEBI:29105"/>
        <note>catalytic</note>
    </ligand>
</feature>
<feature type="binding site" evidence="1">
    <location>
        <begin position="209"/>
        <end position="211"/>
    </location>
    <ligand>
        <name>dihydroxyacetone phosphate</name>
        <dbReference type="ChEBI" id="CHEBI:57642"/>
    </ligand>
</feature>
<feature type="binding site" evidence="1">
    <location>
        <begin position="230"/>
        <end position="233"/>
    </location>
    <ligand>
        <name>dihydroxyacetone phosphate</name>
        <dbReference type="ChEBI" id="CHEBI:57642"/>
    </ligand>
</feature>
<organism>
    <name type="scientific">Escherichia coli O1:K1 / APEC</name>
    <dbReference type="NCBI Taxonomy" id="405955"/>
    <lineage>
        <taxon>Bacteria</taxon>
        <taxon>Pseudomonadati</taxon>
        <taxon>Pseudomonadota</taxon>
        <taxon>Gammaproteobacteria</taxon>
        <taxon>Enterobacterales</taxon>
        <taxon>Enterobacteriaceae</taxon>
        <taxon>Escherichia</taxon>
    </lineage>
</organism>
<keyword id="KW-0298">Galactitol metabolism</keyword>
<keyword id="KW-0456">Lyase</keyword>
<keyword id="KW-0479">Metal-binding</keyword>
<keyword id="KW-1185">Reference proteome</keyword>
<keyword id="KW-0862">Zinc</keyword>
<accession>A1ACW2</accession>